<gene>
    <name evidence="1" type="primary">yohO</name>
    <name type="ordered locus">EcHS_A2262</name>
</gene>
<evidence type="ECO:0000255" key="1">
    <source>
        <dbReference type="HAMAP-Rule" id="MF_01362"/>
    </source>
</evidence>
<proteinExistence type="inferred from homology"/>
<protein>
    <recommendedName>
        <fullName evidence="1">UPF0387 membrane protein YohO</fullName>
    </recommendedName>
</protein>
<name>YOHO_ECOHS</name>
<feature type="chain" id="PRO_1000067788" description="UPF0387 membrane protein YohO">
    <location>
        <begin position="1"/>
        <end position="35"/>
    </location>
</feature>
<feature type="transmembrane region" description="Helical" evidence="1">
    <location>
        <begin position="6"/>
        <end position="26"/>
    </location>
</feature>
<reference key="1">
    <citation type="journal article" date="2008" name="J. Bacteriol.">
        <title>The pangenome structure of Escherichia coli: comparative genomic analysis of E. coli commensal and pathogenic isolates.</title>
        <authorList>
            <person name="Rasko D.A."/>
            <person name="Rosovitz M.J."/>
            <person name="Myers G.S.A."/>
            <person name="Mongodin E.F."/>
            <person name="Fricke W.F."/>
            <person name="Gajer P."/>
            <person name="Crabtree J."/>
            <person name="Sebaihia M."/>
            <person name="Thomson N.R."/>
            <person name="Chaudhuri R."/>
            <person name="Henderson I.R."/>
            <person name="Sperandio V."/>
            <person name="Ravel J."/>
        </authorList>
    </citation>
    <scope>NUCLEOTIDE SEQUENCE [LARGE SCALE GENOMIC DNA]</scope>
    <source>
        <strain>HS</strain>
    </source>
</reference>
<organism>
    <name type="scientific">Escherichia coli O9:H4 (strain HS)</name>
    <dbReference type="NCBI Taxonomy" id="331112"/>
    <lineage>
        <taxon>Bacteria</taxon>
        <taxon>Pseudomonadati</taxon>
        <taxon>Pseudomonadota</taxon>
        <taxon>Gammaproteobacteria</taxon>
        <taxon>Enterobacterales</taxon>
        <taxon>Enterobacteriaceae</taxon>
        <taxon>Escherichia</taxon>
    </lineage>
</organism>
<keyword id="KW-0997">Cell inner membrane</keyword>
<keyword id="KW-1003">Cell membrane</keyword>
<keyword id="KW-0472">Membrane</keyword>
<keyword id="KW-0812">Transmembrane</keyword>
<keyword id="KW-1133">Transmembrane helix</keyword>
<accession>A8A1Z0</accession>
<comment type="subcellular location">
    <subcellularLocation>
        <location evidence="1">Cell inner membrane</location>
        <topology evidence="1">Single-pass membrane protein</topology>
    </subcellularLocation>
</comment>
<comment type="similarity">
    <text evidence="1">Belongs to the UPF0387 family.</text>
</comment>
<dbReference type="EMBL" id="CP000802">
    <property type="protein sequence ID" value="ABV06544.1"/>
    <property type="molecule type" value="Genomic_DNA"/>
</dbReference>
<dbReference type="RefSeq" id="WP_001216963.1">
    <property type="nucleotide sequence ID" value="NC_009800.1"/>
</dbReference>
<dbReference type="KEGG" id="ecx:EcHS_A2262"/>
<dbReference type="HOGENOM" id="CLU_220259_0_0_6"/>
<dbReference type="GO" id="GO:0005886">
    <property type="term" value="C:plasma membrane"/>
    <property type="evidence" value="ECO:0007669"/>
    <property type="project" value="UniProtKB-SubCell"/>
</dbReference>
<dbReference type="HAMAP" id="MF_01362">
    <property type="entry name" value="UPF0387"/>
    <property type="match status" value="1"/>
</dbReference>
<dbReference type="InterPro" id="IPR020870">
    <property type="entry name" value="UPF0387_membrane"/>
</dbReference>
<dbReference type="NCBIfam" id="NF010225">
    <property type="entry name" value="PRK13681.1"/>
    <property type="match status" value="1"/>
</dbReference>
<sequence length="35" mass="3643">MRIAKIGVIALFLFMALGGIGGVMLAGYTFILRAG</sequence>